<name>Y1141_METJA</name>
<gene>
    <name type="ordered locus">MJ1141</name>
</gene>
<sequence length="214" mass="24430">MISILGLDGFLQLVGMITIAIFALAFISFILILIISYILLKKNKLIFPSLALFLMDNLYSILLKIFLLIGTEDTFYRVGIEFYNKYYEDRFKKAKKRVLILPHCLRDTKCPAKLTPKGVECIFCNRCRVGEIIKVAEEKGYKVYIVPGSTFLKRILKEEKPEAVFGVACNRDLFYGMNMLSRKGIPSQGQPLLRDGCINTLVDVDELITRLKSL</sequence>
<reference key="1">
    <citation type="journal article" date="1996" name="Science">
        <title>Complete genome sequence of the methanogenic archaeon, Methanococcus jannaschii.</title>
        <authorList>
            <person name="Bult C.J."/>
            <person name="White O."/>
            <person name="Olsen G.J."/>
            <person name="Zhou L."/>
            <person name="Fleischmann R.D."/>
            <person name="Sutton G.G."/>
            <person name="Blake J.A."/>
            <person name="FitzGerald L.M."/>
            <person name="Clayton R.A."/>
            <person name="Gocayne J.D."/>
            <person name="Kerlavage A.R."/>
            <person name="Dougherty B.A."/>
            <person name="Tomb J.-F."/>
            <person name="Adams M.D."/>
            <person name="Reich C.I."/>
            <person name="Overbeek R."/>
            <person name="Kirkness E.F."/>
            <person name="Weinstock K.G."/>
            <person name="Merrick J.M."/>
            <person name="Glodek A."/>
            <person name="Scott J.L."/>
            <person name="Geoghagen N.S.M."/>
            <person name="Weidman J.F."/>
            <person name="Fuhrmann J.L."/>
            <person name="Nguyen D."/>
            <person name="Utterback T.R."/>
            <person name="Kelley J.M."/>
            <person name="Peterson J.D."/>
            <person name="Sadow P.W."/>
            <person name="Hanna M.C."/>
            <person name="Cotton M.D."/>
            <person name="Roberts K.M."/>
            <person name="Hurst M.A."/>
            <person name="Kaine B.P."/>
            <person name="Borodovsky M."/>
            <person name="Klenk H.-P."/>
            <person name="Fraser C.M."/>
            <person name="Smith H.O."/>
            <person name="Woese C.R."/>
            <person name="Venter J.C."/>
        </authorList>
    </citation>
    <scope>NUCLEOTIDE SEQUENCE [LARGE SCALE GENOMIC DNA]</scope>
    <source>
        <strain>ATCC 43067 / DSM 2661 / JAL-1 / JCM 10045 / NBRC 100440</strain>
    </source>
</reference>
<feature type="chain" id="PRO_0000107186" description="Uncharacterized protein MJ1141">
    <location>
        <begin position="1"/>
        <end position="214"/>
    </location>
</feature>
<feature type="transmembrane region" description="Helical" evidence="1">
    <location>
        <begin position="19"/>
        <end position="39"/>
    </location>
</feature>
<feature type="transmembrane region" description="Helical" evidence="1">
    <location>
        <begin position="50"/>
        <end position="70"/>
    </location>
</feature>
<keyword id="KW-1003">Cell membrane</keyword>
<keyword id="KW-0472">Membrane</keyword>
<keyword id="KW-1185">Reference proteome</keyword>
<keyword id="KW-0812">Transmembrane</keyword>
<keyword id="KW-1133">Transmembrane helix</keyword>
<evidence type="ECO:0000255" key="1"/>
<evidence type="ECO:0000305" key="2"/>
<proteinExistence type="predicted"/>
<accession>Q58541</accession>
<comment type="subcellular location">
    <subcellularLocation>
        <location evidence="2">Cell membrane</location>
        <topology evidence="2">Multi-pass membrane protein</topology>
    </subcellularLocation>
</comment>
<dbReference type="EMBL" id="L77117">
    <property type="protein sequence ID" value="AAB99141.1"/>
    <property type="molecule type" value="Genomic_DNA"/>
</dbReference>
<dbReference type="PIR" id="D64442">
    <property type="entry name" value="D64442"/>
</dbReference>
<dbReference type="RefSeq" id="WP_010870652.1">
    <property type="nucleotide sequence ID" value="NC_000909.1"/>
</dbReference>
<dbReference type="STRING" id="243232.MJ_1141"/>
<dbReference type="PaxDb" id="243232-MJ_1141"/>
<dbReference type="EnsemblBacteria" id="AAB99141">
    <property type="protein sequence ID" value="AAB99141"/>
    <property type="gene ID" value="MJ_1141"/>
</dbReference>
<dbReference type="GeneID" id="1452037"/>
<dbReference type="KEGG" id="mja:MJ_1141"/>
<dbReference type="eggNOG" id="arCOG02078">
    <property type="taxonomic scope" value="Archaea"/>
</dbReference>
<dbReference type="HOGENOM" id="CLU_067052_1_0_2"/>
<dbReference type="InParanoid" id="Q58541"/>
<dbReference type="PhylomeDB" id="Q58541"/>
<dbReference type="Proteomes" id="UP000000805">
    <property type="component" value="Chromosome"/>
</dbReference>
<dbReference type="GO" id="GO:0005886">
    <property type="term" value="C:plasma membrane"/>
    <property type="evidence" value="ECO:0007669"/>
    <property type="project" value="UniProtKB-SubCell"/>
</dbReference>
<dbReference type="InterPro" id="IPR002829">
    <property type="entry name" value="DUF116"/>
</dbReference>
<dbReference type="PANTHER" id="PTHR43801">
    <property type="entry name" value="NUCLEOTIDE-BINDING PROTEIN-RELATED"/>
    <property type="match status" value="1"/>
</dbReference>
<dbReference type="PANTHER" id="PTHR43801:SF1">
    <property type="entry name" value="POLYPRENYL SYNTHETASE"/>
    <property type="match status" value="1"/>
</dbReference>
<dbReference type="Pfam" id="PF01976">
    <property type="entry name" value="DUF116"/>
    <property type="match status" value="1"/>
</dbReference>
<dbReference type="PIRSF" id="PIRSF006594">
    <property type="entry name" value="UCP006594"/>
    <property type="match status" value="1"/>
</dbReference>
<organism>
    <name type="scientific">Methanocaldococcus jannaschii (strain ATCC 43067 / DSM 2661 / JAL-1 / JCM 10045 / NBRC 100440)</name>
    <name type="common">Methanococcus jannaschii</name>
    <dbReference type="NCBI Taxonomy" id="243232"/>
    <lineage>
        <taxon>Archaea</taxon>
        <taxon>Methanobacteriati</taxon>
        <taxon>Methanobacteriota</taxon>
        <taxon>Methanomada group</taxon>
        <taxon>Methanococci</taxon>
        <taxon>Methanococcales</taxon>
        <taxon>Methanocaldococcaceae</taxon>
        <taxon>Methanocaldococcus</taxon>
    </lineage>
</organism>
<protein>
    <recommendedName>
        <fullName>Uncharacterized protein MJ1141</fullName>
    </recommendedName>
</protein>